<accession>Q2FXT2</accession>
<proteinExistence type="inferred from homology"/>
<keyword id="KW-1185">Reference proteome</keyword>
<organism>
    <name type="scientific">Staphylococcus aureus (strain NCTC 8325 / PS 47)</name>
    <dbReference type="NCBI Taxonomy" id="93061"/>
    <lineage>
        <taxon>Bacteria</taxon>
        <taxon>Bacillati</taxon>
        <taxon>Bacillota</taxon>
        <taxon>Bacilli</taxon>
        <taxon>Bacillales</taxon>
        <taxon>Staphylococcaceae</taxon>
        <taxon>Staphylococcus</taxon>
    </lineage>
</organism>
<name>Y1752_STAA8</name>
<reference key="1">
    <citation type="book" date="2006" name="Gram positive pathogens, 2nd edition">
        <title>The Staphylococcus aureus NCTC 8325 genome.</title>
        <editorList>
            <person name="Fischetti V."/>
            <person name="Novick R."/>
            <person name="Ferretti J."/>
            <person name="Portnoy D."/>
            <person name="Rood J."/>
        </editorList>
        <authorList>
            <person name="Gillaspy A.F."/>
            <person name="Worrell V."/>
            <person name="Orvis J."/>
            <person name="Roe B.A."/>
            <person name="Dyer D.W."/>
            <person name="Iandolo J.J."/>
        </authorList>
    </citation>
    <scope>NUCLEOTIDE SEQUENCE [LARGE SCALE GENOMIC DNA]</scope>
    <source>
        <strain>NCTC 8325 / PS 47</strain>
    </source>
</reference>
<protein>
    <recommendedName>
        <fullName evidence="1">UPF0735 ACT domain-containing protein SAOUHSC_01752</fullName>
    </recommendedName>
</protein>
<evidence type="ECO:0000255" key="1">
    <source>
        <dbReference type="HAMAP-Rule" id="MF_00707"/>
    </source>
</evidence>
<gene>
    <name type="ordered locus">SAOUHSC_01752</name>
</gene>
<comment type="similarity">
    <text evidence="1">Belongs to the UPF0735 family.</text>
</comment>
<feature type="chain" id="PRO_0000366321" description="UPF0735 ACT domain-containing protein SAOUHSC_01752">
    <location>
        <begin position="1"/>
        <end position="151"/>
    </location>
</feature>
<feature type="domain" description="ACT" evidence="1">
    <location>
        <begin position="74"/>
        <end position="149"/>
    </location>
</feature>
<sequence length="151" mass="17343">MDNKDYKKFYLIREDVLPESVVKTLKIKDALKSDPTLSIYDAVKQFDLSRSAFYKYRETIFPVDDKMLDHREFTLILYVTDIVGMLARVLDVISKLELSVLTIHQSIPMEEKATITLSLNAKSKETSVEDVIGALRNLDYVSKVELISMSM</sequence>
<dbReference type="EMBL" id="CP000253">
    <property type="protein sequence ID" value="ABD30822.1"/>
    <property type="molecule type" value="Genomic_DNA"/>
</dbReference>
<dbReference type="RefSeq" id="WP_000368902.1">
    <property type="nucleotide sequence ID" value="NZ_LS483365.1"/>
</dbReference>
<dbReference type="RefSeq" id="YP_500258.1">
    <property type="nucleotide sequence ID" value="NC_007795.1"/>
</dbReference>
<dbReference type="SMR" id="Q2FXT2"/>
<dbReference type="STRING" id="93061.SAOUHSC_01752"/>
<dbReference type="PaxDb" id="1280-SAXN108_1670"/>
<dbReference type="GeneID" id="3920551"/>
<dbReference type="KEGG" id="sao:SAOUHSC_01752"/>
<dbReference type="PATRIC" id="fig|93061.5.peg.1596"/>
<dbReference type="eggNOG" id="COG4492">
    <property type="taxonomic scope" value="Bacteria"/>
</dbReference>
<dbReference type="HOGENOM" id="CLU_128147_0_0_9"/>
<dbReference type="OrthoDB" id="9788773at2"/>
<dbReference type="PRO" id="PR:Q2FXT2"/>
<dbReference type="Proteomes" id="UP000008816">
    <property type="component" value="Chromosome"/>
</dbReference>
<dbReference type="Gene3D" id="3.30.70.260">
    <property type="match status" value="1"/>
</dbReference>
<dbReference type="HAMAP" id="MF_00707">
    <property type="entry name" value="UPF0735"/>
    <property type="match status" value="1"/>
</dbReference>
<dbReference type="InterPro" id="IPR045865">
    <property type="entry name" value="ACT-like_dom_sf"/>
</dbReference>
<dbReference type="InterPro" id="IPR002912">
    <property type="entry name" value="ACT_dom"/>
</dbReference>
<dbReference type="InterPro" id="IPR008310">
    <property type="entry name" value="UPF0735_ACT_dom-cont"/>
</dbReference>
<dbReference type="NCBIfam" id="NF003361">
    <property type="entry name" value="PRK04435.1"/>
    <property type="match status" value="1"/>
</dbReference>
<dbReference type="PIRSF" id="PIRSF025624">
    <property type="entry name" value="ACT_PheB"/>
    <property type="match status" value="1"/>
</dbReference>
<dbReference type="SUPFAM" id="SSF55021">
    <property type="entry name" value="ACT-like"/>
    <property type="match status" value="1"/>
</dbReference>
<dbReference type="PROSITE" id="PS51671">
    <property type="entry name" value="ACT"/>
    <property type="match status" value="1"/>
</dbReference>